<sequence length="106" mass="11735">MKVLVVVALLVTLISYSSSEGIDDPEADELLSLMANEQTRKECIPKHHECTSNKHGCCRGNFFKYKCQCTTVVTQDGEQTERCFCGTPPHHKAAELVVGFGKKIFG</sequence>
<protein>
    <recommendedName>
        <fullName>U1-lycotoxin-Ls1b</fullName>
    </recommendedName>
    <alternativeName>
        <fullName>Toxin-like structure LSTX-A4</fullName>
    </alternativeName>
</protein>
<feature type="signal peptide" evidence="2">
    <location>
        <begin position="1"/>
        <end position="19"/>
    </location>
</feature>
<feature type="propeptide" id="PRO_0000401507" evidence="1">
    <location>
        <begin position="20"/>
        <end position="40"/>
    </location>
</feature>
<feature type="chain" id="PRO_0000401508" description="U1-lycotoxin-Ls1b">
    <location>
        <begin position="41"/>
        <end position="106"/>
    </location>
</feature>
<feature type="disulfide bond" evidence="1">
    <location>
        <begin position="43"/>
        <end position="58"/>
    </location>
</feature>
<feature type="disulfide bond" evidence="1">
    <location>
        <begin position="50"/>
        <end position="67"/>
    </location>
</feature>
<feature type="disulfide bond" evidence="1">
    <location>
        <begin position="57"/>
        <end position="85"/>
    </location>
</feature>
<feature type="disulfide bond" evidence="1">
    <location>
        <begin position="69"/>
        <end position="83"/>
    </location>
</feature>
<accession>B6DCJ3</accession>
<evidence type="ECO:0000250" key="1"/>
<evidence type="ECO:0000255" key="2"/>
<evidence type="ECO:0000305" key="3"/>
<reference key="1">
    <citation type="journal article" date="2010" name="Zoology">
        <title>Transcriptome analysis of the venom glands of the Chinese wolf spider Lycosa singoriensis.</title>
        <authorList>
            <person name="Zhang Y."/>
            <person name="Chen J."/>
            <person name="Tang X."/>
            <person name="Wang F."/>
            <person name="Jiang L."/>
            <person name="Xiong X."/>
            <person name="Wang M."/>
            <person name="Rong M."/>
            <person name="Liu Z."/>
            <person name="Liang S."/>
        </authorList>
    </citation>
    <scope>NUCLEOTIDE SEQUENCE [LARGE SCALE MRNA]</scope>
    <source>
        <tissue>Venom gland</tissue>
    </source>
</reference>
<comment type="subcellular location">
    <subcellularLocation>
        <location evidence="1">Secreted</location>
    </subcellularLocation>
</comment>
<comment type="tissue specificity">
    <text>Expressed by the venom gland.</text>
</comment>
<comment type="domain">
    <text evidence="1">The presence of a 'disulfide through disulfide knot' structurally defines this protein as a knottin.</text>
</comment>
<comment type="similarity">
    <text evidence="3">Belongs to the neurotoxin 19 (CSTX) family. 04 (U1-Lctx) subfamily.</text>
</comment>
<name>TX104_LYCSI</name>
<organism>
    <name type="scientific">Lycosa singoriensis</name>
    <name type="common">Wolf spider</name>
    <name type="synonym">Aranea singoriensis</name>
    <dbReference type="NCBI Taxonomy" id="434756"/>
    <lineage>
        <taxon>Eukaryota</taxon>
        <taxon>Metazoa</taxon>
        <taxon>Ecdysozoa</taxon>
        <taxon>Arthropoda</taxon>
        <taxon>Chelicerata</taxon>
        <taxon>Arachnida</taxon>
        <taxon>Araneae</taxon>
        <taxon>Araneomorphae</taxon>
        <taxon>Entelegynae</taxon>
        <taxon>Lycosoidea</taxon>
        <taxon>Lycosidae</taxon>
        <taxon>Lycosa</taxon>
    </lineage>
</organism>
<dbReference type="EMBL" id="EU925927">
    <property type="protein sequence ID" value="ACI41259.1"/>
    <property type="molecule type" value="mRNA"/>
</dbReference>
<dbReference type="EMBL" id="FM863931">
    <property type="protein sequence ID" value="CAS03531.1"/>
    <property type="molecule type" value="mRNA"/>
</dbReference>
<dbReference type="SMR" id="B6DCJ3"/>
<dbReference type="ArachnoServer" id="AS000884">
    <property type="toxin name" value="U1-lycotoxin-Ls1b"/>
</dbReference>
<dbReference type="GO" id="GO:0005576">
    <property type="term" value="C:extracellular region"/>
    <property type="evidence" value="ECO:0007669"/>
    <property type="project" value="UniProtKB-SubCell"/>
</dbReference>
<dbReference type="GO" id="GO:0090729">
    <property type="term" value="F:toxin activity"/>
    <property type="evidence" value="ECO:0007669"/>
    <property type="project" value="UniProtKB-KW"/>
</dbReference>
<dbReference type="InterPro" id="IPR019553">
    <property type="entry name" value="Spider_toxin_CSTX_knottin"/>
</dbReference>
<dbReference type="InterPro" id="IPR011142">
    <property type="entry name" value="Spider_toxin_CSTX_Knottin_CS"/>
</dbReference>
<dbReference type="Pfam" id="PF10530">
    <property type="entry name" value="Toxin_35"/>
    <property type="match status" value="1"/>
</dbReference>
<dbReference type="PROSITE" id="PS60029">
    <property type="entry name" value="SPIDER_CSTX"/>
    <property type="match status" value="1"/>
</dbReference>
<proteinExistence type="evidence at transcript level"/>
<keyword id="KW-1015">Disulfide bond</keyword>
<keyword id="KW-0960">Knottin</keyword>
<keyword id="KW-0964">Secreted</keyword>
<keyword id="KW-0732">Signal</keyword>
<keyword id="KW-0800">Toxin</keyword>